<organism>
    <name type="scientific">Toxoplasma gondii</name>
    <dbReference type="NCBI Taxonomy" id="5811"/>
    <lineage>
        <taxon>Eukaryota</taxon>
        <taxon>Sar</taxon>
        <taxon>Alveolata</taxon>
        <taxon>Apicomplexa</taxon>
        <taxon>Conoidasida</taxon>
        <taxon>Coccidia</taxon>
        <taxon>Eucoccidiorida</taxon>
        <taxon>Eimeriorina</taxon>
        <taxon>Sarcocystidae</taxon>
        <taxon>Toxoplasma</taxon>
    </lineage>
</organism>
<name>GRA1_TOXGO</name>
<feature type="signal peptide" evidence="1">
    <location>
        <begin position="1"/>
        <end position="24"/>
    </location>
</feature>
<feature type="chain" id="PRO_0000021365" description="Dense granule protein 1">
    <location>
        <begin position="25"/>
        <end position="190"/>
    </location>
</feature>
<feature type="glycosylation site" description="N-linked (GlcNAc...) asparagine" evidence="1">
    <location>
        <position position="30"/>
    </location>
</feature>
<reference key="1">
    <citation type="journal article" date="1989" name="Proc. Natl. Acad. Sci. U.S.A.">
        <title>Molecular characterization of a 23-kilodalton major antigen secreted by Toxoplasma gondii.</title>
        <authorList>
            <person name="Cesbron-Delauw M.-F."/>
            <person name="Guy B."/>
            <person name="Torpier G."/>
            <person name="Pierce R.J."/>
            <person name="Lenzen G."/>
            <person name="Cesbron J.Y."/>
            <person name="Charif H."/>
            <person name="Lepage P."/>
            <person name="Darcy F."/>
            <person name="Lecocq J.-P."/>
            <person name="Capron A."/>
        </authorList>
    </citation>
    <scope>NUCLEOTIDE SEQUENCE [GENOMIC DNA]</scope>
</reference>
<proteinExistence type="inferred from homology"/>
<accession>P13403</accession>
<gene>
    <name type="primary">GRA1</name>
</gene>
<protein>
    <recommendedName>
        <fullName>Dense granule protein 1</fullName>
        <shortName>Protein GRA 1</shortName>
    </recommendedName>
    <alternativeName>
        <fullName>Major antigen p24</fullName>
    </alternativeName>
</protein>
<evidence type="ECO:0000255" key="1"/>
<evidence type="ECO:0000305" key="2"/>
<comment type="subcellular location">
    <subcellularLocation>
        <location>Secreted</location>
    </subcellularLocation>
    <text>Located in dense granules of tachyzoites.</text>
</comment>
<comment type="caution">
    <text evidence="2">PubMed:2798425 reported that there are two potential EF-hand regions, but the evidence seems weak.</text>
</comment>
<sequence length="190" mass="20149">MVRVSAIVGAAASVFVCLSAGAYAAEGGDNQSSAVSDRASLFGLLSGGTGQGLGIGESVDLEMMGNTYRVERPTGNPDLLKIAIKASDGSYSEVGNVNVEEVIDTMKSMQRDEDIFLRALNKGETVEEAIEDVAQAEGLNSEQTLQLEDAVSAVASVVQDEMKVIDDVQQLEKDKQQLKDDIGFLTGERE</sequence>
<keyword id="KW-0325">Glycoprotein</keyword>
<keyword id="KW-0964">Secreted</keyword>
<keyword id="KW-0732">Signal</keyword>
<dbReference type="EMBL" id="M26007">
    <property type="protein sequence ID" value="AAA30141.1"/>
    <property type="molecule type" value="Genomic_DNA"/>
</dbReference>
<dbReference type="PIR" id="A33839">
    <property type="entry name" value="A33839"/>
</dbReference>
<dbReference type="SMR" id="P13403"/>
<dbReference type="GlyCosmos" id="P13403">
    <property type="glycosylation" value="1 site, No reported glycans"/>
</dbReference>
<dbReference type="VEuPathDB" id="ToxoDB:TGARI_270250"/>
<dbReference type="VEuPathDB" id="ToxoDB:TGCAST_270250"/>
<dbReference type="VEuPathDB" id="ToxoDB:TGCOUG_270250"/>
<dbReference type="VEuPathDB" id="ToxoDB:TGDOM2_270250"/>
<dbReference type="VEuPathDB" id="ToxoDB:TGFOU_270250"/>
<dbReference type="VEuPathDB" id="ToxoDB:TGGT1_270250"/>
<dbReference type="VEuPathDB" id="ToxoDB:TGMAS_270250"/>
<dbReference type="VEuPathDB" id="ToxoDB:TGME49_270250"/>
<dbReference type="VEuPathDB" id="ToxoDB:TGP89_270250"/>
<dbReference type="VEuPathDB" id="ToxoDB:TGPRC2_270250"/>
<dbReference type="VEuPathDB" id="ToxoDB:TGRH88_081130"/>
<dbReference type="VEuPathDB" id="ToxoDB:TGRUB_270250"/>
<dbReference type="VEuPathDB" id="ToxoDB:TGVAND_270250"/>
<dbReference type="VEuPathDB" id="ToxoDB:TGVEG_270250"/>
<dbReference type="GO" id="GO:0005576">
    <property type="term" value="C:extracellular region"/>
    <property type="evidence" value="ECO:0007669"/>
    <property type="project" value="UniProtKB-SubCell"/>
</dbReference>